<feature type="chain" id="PRO_0000417809" description="Casparian strip membrane protein 1">
    <location>
        <begin position="1"/>
        <end position="200"/>
    </location>
</feature>
<feature type="topological domain" description="Cytoplasmic" evidence="2">
    <location>
        <begin position="1"/>
        <end position="38"/>
    </location>
</feature>
<feature type="transmembrane region" description="Helical" evidence="2">
    <location>
        <begin position="39"/>
        <end position="59"/>
    </location>
</feature>
<feature type="topological domain" description="Extracellular" evidence="2">
    <location>
        <begin position="60"/>
        <end position="86"/>
    </location>
</feature>
<feature type="transmembrane region" description="Helical" evidence="2">
    <location>
        <begin position="87"/>
        <end position="107"/>
    </location>
</feature>
<feature type="topological domain" description="Cytoplasmic" evidence="2">
    <location>
        <begin position="108"/>
        <end position="121"/>
    </location>
</feature>
<feature type="transmembrane region" description="Helical" evidence="2">
    <location>
        <begin position="122"/>
        <end position="142"/>
    </location>
</feature>
<feature type="topological domain" description="Extracellular" evidence="2">
    <location>
        <begin position="143"/>
        <end position="171"/>
    </location>
</feature>
<feature type="transmembrane region" description="Helical" evidence="2">
    <location>
        <begin position="172"/>
        <end position="192"/>
    </location>
</feature>
<feature type="topological domain" description="Cytoplasmic" evidence="2">
    <location>
        <begin position="193"/>
        <end position="200"/>
    </location>
</feature>
<evidence type="ECO:0000250" key="1"/>
<evidence type="ECO:0000255" key="2"/>
<evidence type="ECO:0000305" key="3"/>
<sequence length="200" mass="21120">MKSGDHAAIDVPESSAVAKGKAPLIATPREQKSGFKKGLGIFDFLLRLGAIIAALAAAATMGTSDETLPFFTQFFQFEASYDDLPTFMFFVIAMALIGGYLVLSLPFSIVTIVRPHAVAPRLLLFILDIVALTLTTAAGAAAAAIVYLAHNGNPNTNWLAICQQFGDFCQEVSGAVVASFVTVVVLMSLVLLSGVALKKH</sequence>
<dbReference type="EMBL" id="CU571771">
    <property type="status" value="NOT_ANNOTATED_CDS"/>
    <property type="molecule type" value="mRNA"/>
</dbReference>
<dbReference type="RefSeq" id="NP_001391920.1">
    <property type="nucleotide sequence ID" value="NM_001404991.1"/>
</dbReference>
<dbReference type="RefSeq" id="XP_007027844.2">
    <property type="nucleotide sequence ID" value="XM_007027782.2"/>
</dbReference>
<dbReference type="EnsemblPlants" id="Tc05v2_t008240.1">
    <property type="protein sequence ID" value="Tc05v2_p008240.1"/>
    <property type="gene ID" value="Tc05v2_g008240"/>
</dbReference>
<dbReference type="GeneID" id="18598306"/>
<dbReference type="Gramene" id="Tc05v2_t008240.1">
    <property type="protein sequence ID" value="Tc05v2_p008240.1"/>
    <property type="gene ID" value="Tc05v2_g008240"/>
</dbReference>
<dbReference type="KEGG" id="tcc:18598306"/>
<dbReference type="eggNOG" id="ENOG502QZV7">
    <property type="taxonomic scope" value="Eukaryota"/>
</dbReference>
<dbReference type="OrthoDB" id="753675at2759"/>
<dbReference type="Proteomes" id="UP000694886">
    <property type="component" value="Chromosome 5"/>
</dbReference>
<dbReference type="GO" id="GO:0005886">
    <property type="term" value="C:plasma membrane"/>
    <property type="evidence" value="ECO:0007669"/>
    <property type="project" value="UniProtKB-SubCell"/>
</dbReference>
<dbReference type="GO" id="GO:0071555">
    <property type="term" value="P:cell wall organization"/>
    <property type="evidence" value="ECO:0007669"/>
    <property type="project" value="UniProtKB-KW"/>
</dbReference>
<dbReference type="InterPro" id="IPR006459">
    <property type="entry name" value="CASP/CASPL"/>
</dbReference>
<dbReference type="InterPro" id="IPR006702">
    <property type="entry name" value="CASP_dom"/>
</dbReference>
<dbReference type="InterPro" id="IPR044173">
    <property type="entry name" value="CASPL"/>
</dbReference>
<dbReference type="NCBIfam" id="TIGR01569">
    <property type="entry name" value="A_tha_TIGR01569"/>
    <property type="match status" value="1"/>
</dbReference>
<dbReference type="PANTHER" id="PTHR36488:SF11">
    <property type="entry name" value="CASP-LIKE PROTEIN"/>
    <property type="match status" value="1"/>
</dbReference>
<dbReference type="PANTHER" id="PTHR36488">
    <property type="entry name" value="CASP-LIKE PROTEIN 1U1"/>
    <property type="match status" value="1"/>
</dbReference>
<dbReference type="Pfam" id="PF04535">
    <property type="entry name" value="CASP_dom"/>
    <property type="match status" value="1"/>
</dbReference>
<accession>P0DI43</accession>
<reference key="1">
    <citation type="journal article" date="2008" name="BMC Genomics">
        <title>Towards the understanding of the cocoa transcriptome: Production and analysis of an exhaustive dataset of ESTs of Theobroma cacao L. generated from various tissues and under various conditions.</title>
        <authorList>
            <person name="Argout X."/>
            <person name="Fouet O."/>
            <person name="Wincker P."/>
            <person name="Gramacho K."/>
            <person name="Legavre T."/>
            <person name="Sabau X."/>
            <person name="Risterucci A.M."/>
            <person name="Da Silva C."/>
            <person name="Cascardo J."/>
            <person name="Allegre M."/>
            <person name="Kuhn D."/>
            <person name="Verica J."/>
            <person name="Courtois B."/>
            <person name="Loor G."/>
            <person name="Babin R."/>
            <person name="Sounigo O."/>
            <person name="Ducamp M."/>
            <person name="Guiltinan M.J."/>
            <person name="Ruiz M."/>
            <person name="Alemanno L."/>
            <person name="Machado R."/>
            <person name="Phillips W."/>
            <person name="Schnell R."/>
            <person name="Gilmour M."/>
            <person name="Rosenquist E."/>
            <person name="Butler D."/>
            <person name="Maximova S."/>
            <person name="Lanaud C."/>
        </authorList>
    </citation>
    <scope>NUCLEOTIDE SEQUENCE [LARGE SCALE MRNA]</scope>
    <source>
        <tissue>Hypocotyl</tissue>
    </source>
</reference>
<reference key="2">
    <citation type="journal article" date="2014" name="Plant Physiol.">
        <title>Functional and evolutionary analysis of the CASPARIAN STRIP MEMBRANE DOMAIN PROTEIN family.</title>
        <authorList>
            <person name="Roppolo D."/>
            <person name="Boeckmann B."/>
            <person name="Pfister A."/>
            <person name="Boutet E."/>
            <person name="Rubio M.C."/>
            <person name="Denervaud-Tendon V."/>
            <person name="Vermeer J.E."/>
            <person name="Gheyselinck J."/>
            <person name="Xenarios I."/>
            <person name="Geldner N."/>
        </authorList>
    </citation>
    <scope>GENE FAMILY</scope>
    <scope>NOMENCLATURE</scope>
</reference>
<name>CASP1_THECC</name>
<protein>
    <recommendedName>
        <fullName>Casparian strip membrane protein 1</fullName>
        <shortName>TcCASP1</shortName>
    </recommendedName>
</protein>
<proteinExistence type="evidence at transcript level"/>
<comment type="function">
    <text evidence="1">Regulates membrane-cell wall junctions and localized cell wall deposition. Required for establishment of the Casparian strip membrane domain (CSD) and the subsequent formation of Casparian strips, a cell wall modification of the root endodermis that determines an apoplastic barrier between the intraorganismal apoplasm and the extraorganismal apoplasm and prevents lateral diffusion (By similarity).</text>
</comment>
<comment type="subunit">
    <text evidence="1">Homodimer and heterodimers.</text>
</comment>
<comment type="subcellular location">
    <subcellularLocation>
        <location evidence="1">Cell membrane</location>
        <topology evidence="1">Multi-pass membrane protein</topology>
    </subcellularLocation>
    <text evidence="1">Very restricted localization following a belt shape within the plasma membrane which coincides with the position of the Casparian strip membrane domain in the root endodermis.</text>
</comment>
<comment type="similarity">
    <text evidence="3">Belongs to the Casparian strip membrane proteins (CASP) family.</text>
</comment>
<organism>
    <name type="scientific">Theobroma cacao</name>
    <name type="common">Cacao</name>
    <name type="synonym">Cocoa</name>
    <dbReference type="NCBI Taxonomy" id="3641"/>
    <lineage>
        <taxon>Eukaryota</taxon>
        <taxon>Viridiplantae</taxon>
        <taxon>Streptophyta</taxon>
        <taxon>Embryophyta</taxon>
        <taxon>Tracheophyta</taxon>
        <taxon>Spermatophyta</taxon>
        <taxon>Magnoliopsida</taxon>
        <taxon>eudicotyledons</taxon>
        <taxon>Gunneridae</taxon>
        <taxon>Pentapetalae</taxon>
        <taxon>rosids</taxon>
        <taxon>malvids</taxon>
        <taxon>Malvales</taxon>
        <taxon>Malvaceae</taxon>
        <taxon>Byttnerioideae</taxon>
        <taxon>Theobroma</taxon>
    </lineage>
</organism>
<keyword id="KW-1003">Cell membrane</keyword>
<keyword id="KW-0961">Cell wall biogenesis/degradation</keyword>
<keyword id="KW-0472">Membrane</keyword>
<keyword id="KW-0812">Transmembrane</keyword>
<keyword id="KW-1133">Transmembrane helix</keyword>